<name>RLR8_PLAVT</name>
<organism>
    <name type="scientific">Plasmopara viticola</name>
    <name type="common">Downy mildew of grapevine</name>
    <name type="synonym">Botrytis viticola</name>
    <dbReference type="NCBI Taxonomy" id="143451"/>
    <lineage>
        <taxon>Eukaryota</taxon>
        <taxon>Sar</taxon>
        <taxon>Stramenopiles</taxon>
        <taxon>Oomycota</taxon>
        <taxon>Peronosporales</taxon>
        <taxon>Peronosporaceae</taxon>
        <taxon>Plasmopara</taxon>
    </lineage>
</organism>
<protein>
    <recommendedName>
        <fullName evidence="5">Secreted RxLR effector protein 8</fullName>
    </recommendedName>
</protein>
<sequence>MRGTLATALLLVISSRVATESNQLDPQQLSNHVVGTYDKIYTKSSPRRFLRGSRKQRDDLAPTAADENRTINNAIESAMHGITFSGGTTAATRNAAREVVDINAFSKRPRLSLNVPPSETSAHLIEAPTFPQRNSASTSTTSDIATSSSRTSNQRTPKTQASLDMSHKTMTRKSSSKNQFKKSTALKSTKRKVRARKIPAFVVNKVYTLYFDHVKTKSLGFDPTVKETKAMLSLYFESSVDPFYVSAVLSNFFRYFDDKELTIHKKKLGTTLTSALSTLAALELPPGMLKEIERPFVWYASLKRWRVMYCDFFEFVKVNSDKITNSLPNKEFYRGETSDIVRDKLLATLKKETNTNTRYKRKRKLKNDLDDVLKKYNVKEEIGAAIRDLGEQFLKADRQTIPSRRPTRRPGASHIQPSNQRTDLTPHGLQVPGPEKNSYQHIKSKDHARKKRPRSSS</sequence>
<accession>P0CU95</accession>
<dbReference type="SMR" id="P0CU95"/>
<dbReference type="GlyCosmos" id="P0CU95">
    <property type="glycosylation" value="1 site, No reported glycans"/>
</dbReference>
<dbReference type="GO" id="GO:0005576">
    <property type="term" value="C:extracellular region"/>
    <property type="evidence" value="ECO:0007669"/>
    <property type="project" value="UniProtKB-SubCell"/>
</dbReference>
<dbReference type="GO" id="GO:0042025">
    <property type="term" value="C:host cell nucleus"/>
    <property type="evidence" value="ECO:0007669"/>
    <property type="project" value="UniProtKB-SubCell"/>
</dbReference>
<evidence type="ECO:0000255" key="1"/>
<evidence type="ECO:0000255" key="2">
    <source>
        <dbReference type="PROSITE-ProRule" id="PRU00498"/>
    </source>
</evidence>
<evidence type="ECO:0000256" key="3">
    <source>
        <dbReference type="SAM" id="MobiDB-lite"/>
    </source>
</evidence>
<evidence type="ECO:0000269" key="4">
    <source>
    </source>
</evidence>
<evidence type="ECO:0000303" key="5">
    <source>
    </source>
</evidence>
<evidence type="ECO:0000305" key="6"/>
<evidence type="ECO:0000305" key="7">
    <source>
    </source>
</evidence>
<comment type="function">
    <text evidence="4">Secreted effector that completely suppresses the host cell death induced by cell death-inducing proteins.</text>
</comment>
<comment type="subcellular location">
    <subcellularLocation>
        <location evidence="4">Secreted</location>
    </subcellularLocation>
    <subcellularLocation>
        <location evidence="4">Host nucleus</location>
    </subcellularLocation>
</comment>
<comment type="domain">
    <text evidence="7">The RxLR-dEER motif acts to carry the protein into the host cell cytoplasm through binding to cell surface phosphatidylinositol-3-phosphate.</text>
</comment>
<comment type="similarity">
    <text evidence="6">Belongs to the RxLR effector family.</text>
</comment>
<feature type="signal peptide" evidence="1">
    <location>
        <begin position="1"/>
        <end position="19"/>
    </location>
</feature>
<feature type="chain" id="PRO_0000447904" description="Secreted RxLR effector protein 8">
    <location>
        <begin position="20"/>
        <end position="457"/>
    </location>
</feature>
<feature type="region of interest" description="Disordered" evidence="3">
    <location>
        <begin position="110"/>
        <end position="188"/>
    </location>
</feature>
<feature type="region of interest" description="Disordered" evidence="3">
    <location>
        <begin position="398"/>
        <end position="457"/>
    </location>
</feature>
<feature type="short sequence motif" description="RxLR-dEER" evidence="7">
    <location>
        <begin position="48"/>
        <end position="69"/>
    </location>
</feature>
<feature type="compositionally biased region" description="Low complexity" evidence="3">
    <location>
        <begin position="135"/>
        <end position="152"/>
    </location>
</feature>
<feature type="compositionally biased region" description="Polar residues" evidence="3">
    <location>
        <begin position="153"/>
        <end position="163"/>
    </location>
</feature>
<feature type="compositionally biased region" description="Polar residues" evidence="3">
    <location>
        <begin position="176"/>
        <end position="187"/>
    </location>
</feature>
<feature type="compositionally biased region" description="Basic residues" evidence="3">
    <location>
        <begin position="442"/>
        <end position="457"/>
    </location>
</feature>
<feature type="glycosylation site" description="N-linked (GlcNAc...) asparagine" evidence="2">
    <location>
        <position position="68"/>
    </location>
</feature>
<proteinExistence type="evidence at transcript level"/>
<reference key="1">
    <citation type="journal article" date="2018" name="Front. Plant Sci.">
        <title>In planta functional analysis and subcellular localization of the oomycete pathogen Plasmopara viticola candidate RXLR effector repertoire.</title>
        <authorList>
            <person name="Liu Y."/>
            <person name="Lan X."/>
            <person name="Song S."/>
            <person name="Yin L."/>
            <person name="Dry I.B."/>
            <person name="Qu J."/>
            <person name="Xiang J."/>
            <person name="Lu J."/>
        </authorList>
    </citation>
    <scope>NUCLEOTIDE SEQUENCE [MRNA]</scope>
    <scope>DOMAIN</scope>
    <scope>FUNCTION</scope>
    <scope>SUBCELLULAR LOCATION</scope>
</reference>
<gene>
    <name evidence="5" type="primary">RXLR8</name>
</gene>
<keyword id="KW-0325">Glycoprotein</keyword>
<keyword id="KW-1048">Host nucleus</keyword>
<keyword id="KW-0964">Secreted</keyword>
<keyword id="KW-0732">Signal</keyword>
<keyword id="KW-0843">Virulence</keyword>